<name>GPDA_LISMF</name>
<reference key="1">
    <citation type="journal article" date="2004" name="Nucleic Acids Res.">
        <title>Whole genome comparisons of serotype 4b and 1/2a strains of the food-borne pathogen Listeria monocytogenes reveal new insights into the core genome components of this species.</title>
        <authorList>
            <person name="Nelson K.E."/>
            <person name="Fouts D.E."/>
            <person name="Mongodin E.F."/>
            <person name="Ravel J."/>
            <person name="DeBoy R.T."/>
            <person name="Kolonay J.F."/>
            <person name="Rasko D.A."/>
            <person name="Angiuoli S.V."/>
            <person name="Gill S.R."/>
            <person name="Paulsen I.T."/>
            <person name="Peterson J.D."/>
            <person name="White O."/>
            <person name="Nelson W.C."/>
            <person name="Nierman W.C."/>
            <person name="Beanan M.J."/>
            <person name="Brinkac L.M."/>
            <person name="Daugherty S.C."/>
            <person name="Dodson R.J."/>
            <person name="Durkin A.S."/>
            <person name="Madupu R."/>
            <person name="Haft D.H."/>
            <person name="Selengut J."/>
            <person name="Van Aken S.E."/>
            <person name="Khouri H.M."/>
            <person name="Fedorova N."/>
            <person name="Forberger H.A."/>
            <person name="Tran B."/>
            <person name="Kathariou S."/>
            <person name="Wonderling L.D."/>
            <person name="Uhlich G.A."/>
            <person name="Bayles D.O."/>
            <person name="Luchansky J.B."/>
            <person name="Fraser C.M."/>
        </authorList>
    </citation>
    <scope>NUCLEOTIDE SEQUENCE [LARGE SCALE GENOMIC DNA]</scope>
    <source>
        <strain>F2365</strain>
    </source>
</reference>
<feature type="chain" id="PRO_0000137984" description="Glycerol-3-phosphate dehydrogenase [NAD(P)+]">
    <location>
        <begin position="1"/>
        <end position="338"/>
    </location>
</feature>
<feature type="active site" description="Proton acceptor" evidence="1">
    <location>
        <position position="194"/>
    </location>
</feature>
<feature type="binding site" evidence="1">
    <location>
        <position position="13"/>
    </location>
    <ligand>
        <name>NADPH</name>
        <dbReference type="ChEBI" id="CHEBI:57783"/>
    </ligand>
</feature>
<feature type="binding site" evidence="1">
    <location>
        <position position="14"/>
    </location>
    <ligand>
        <name>NADPH</name>
        <dbReference type="ChEBI" id="CHEBI:57783"/>
    </ligand>
</feature>
<feature type="binding site" evidence="1">
    <location>
        <position position="108"/>
    </location>
    <ligand>
        <name>NADPH</name>
        <dbReference type="ChEBI" id="CHEBI:57783"/>
    </ligand>
</feature>
<feature type="binding site" evidence="1">
    <location>
        <position position="108"/>
    </location>
    <ligand>
        <name>sn-glycerol 3-phosphate</name>
        <dbReference type="ChEBI" id="CHEBI:57597"/>
    </ligand>
</feature>
<feature type="binding site" evidence="1">
    <location>
        <position position="139"/>
    </location>
    <ligand>
        <name>sn-glycerol 3-phosphate</name>
        <dbReference type="ChEBI" id="CHEBI:57597"/>
    </ligand>
</feature>
<feature type="binding site" evidence="1">
    <location>
        <position position="141"/>
    </location>
    <ligand>
        <name>sn-glycerol 3-phosphate</name>
        <dbReference type="ChEBI" id="CHEBI:57597"/>
    </ligand>
</feature>
<feature type="binding site" evidence="1">
    <location>
        <position position="143"/>
    </location>
    <ligand>
        <name>NADPH</name>
        <dbReference type="ChEBI" id="CHEBI:57783"/>
    </ligand>
</feature>
<feature type="binding site" evidence="1">
    <location>
        <position position="194"/>
    </location>
    <ligand>
        <name>sn-glycerol 3-phosphate</name>
        <dbReference type="ChEBI" id="CHEBI:57597"/>
    </ligand>
</feature>
<feature type="binding site" evidence="1">
    <location>
        <position position="247"/>
    </location>
    <ligand>
        <name>sn-glycerol 3-phosphate</name>
        <dbReference type="ChEBI" id="CHEBI:57597"/>
    </ligand>
</feature>
<feature type="binding site" evidence="1">
    <location>
        <position position="257"/>
    </location>
    <ligand>
        <name>sn-glycerol 3-phosphate</name>
        <dbReference type="ChEBI" id="CHEBI:57597"/>
    </ligand>
</feature>
<feature type="binding site" evidence="1">
    <location>
        <position position="258"/>
    </location>
    <ligand>
        <name>NADPH</name>
        <dbReference type="ChEBI" id="CHEBI:57783"/>
    </ligand>
</feature>
<feature type="binding site" evidence="1">
    <location>
        <position position="258"/>
    </location>
    <ligand>
        <name>sn-glycerol 3-phosphate</name>
        <dbReference type="ChEBI" id="CHEBI:57597"/>
    </ligand>
</feature>
<feature type="binding site" evidence="1">
    <location>
        <position position="259"/>
    </location>
    <ligand>
        <name>sn-glycerol 3-phosphate</name>
        <dbReference type="ChEBI" id="CHEBI:57597"/>
    </ligand>
</feature>
<feature type="binding site" evidence="1">
    <location>
        <position position="282"/>
    </location>
    <ligand>
        <name>NADPH</name>
        <dbReference type="ChEBI" id="CHEBI:57783"/>
    </ligand>
</feature>
<feature type="binding site" evidence="1">
    <location>
        <position position="284"/>
    </location>
    <ligand>
        <name>NADPH</name>
        <dbReference type="ChEBI" id="CHEBI:57783"/>
    </ligand>
</feature>
<protein>
    <recommendedName>
        <fullName evidence="1">Glycerol-3-phosphate dehydrogenase [NAD(P)+]</fullName>
        <ecNumber evidence="1">1.1.1.94</ecNumber>
    </recommendedName>
    <alternativeName>
        <fullName evidence="1">NAD(P)(+)-dependent glycerol-3-phosphate dehydrogenase</fullName>
    </alternativeName>
    <alternativeName>
        <fullName evidence="1">NAD(P)H-dependent dihydroxyacetone-phosphate reductase</fullName>
    </alternativeName>
</protein>
<comment type="function">
    <text evidence="1">Catalyzes the reduction of the glycolytic intermediate dihydroxyacetone phosphate (DHAP) to sn-glycerol 3-phosphate (G3P), the key precursor for phospholipid synthesis.</text>
</comment>
<comment type="catalytic activity">
    <reaction evidence="1">
        <text>sn-glycerol 3-phosphate + NAD(+) = dihydroxyacetone phosphate + NADH + H(+)</text>
        <dbReference type="Rhea" id="RHEA:11092"/>
        <dbReference type="ChEBI" id="CHEBI:15378"/>
        <dbReference type="ChEBI" id="CHEBI:57540"/>
        <dbReference type="ChEBI" id="CHEBI:57597"/>
        <dbReference type="ChEBI" id="CHEBI:57642"/>
        <dbReference type="ChEBI" id="CHEBI:57945"/>
        <dbReference type="EC" id="1.1.1.94"/>
    </reaction>
    <physiologicalReaction direction="right-to-left" evidence="1">
        <dbReference type="Rhea" id="RHEA:11094"/>
    </physiologicalReaction>
</comment>
<comment type="catalytic activity">
    <reaction evidence="1">
        <text>sn-glycerol 3-phosphate + NADP(+) = dihydroxyacetone phosphate + NADPH + H(+)</text>
        <dbReference type="Rhea" id="RHEA:11096"/>
        <dbReference type="ChEBI" id="CHEBI:15378"/>
        <dbReference type="ChEBI" id="CHEBI:57597"/>
        <dbReference type="ChEBI" id="CHEBI:57642"/>
        <dbReference type="ChEBI" id="CHEBI:57783"/>
        <dbReference type="ChEBI" id="CHEBI:58349"/>
        <dbReference type="EC" id="1.1.1.94"/>
    </reaction>
    <physiologicalReaction direction="right-to-left" evidence="1">
        <dbReference type="Rhea" id="RHEA:11098"/>
    </physiologicalReaction>
</comment>
<comment type="pathway">
    <text evidence="1">Membrane lipid metabolism; glycerophospholipid metabolism.</text>
</comment>
<comment type="subcellular location">
    <subcellularLocation>
        <location evidence="1">Cytoplasm</location>
    </subcellularLocation>
</comment>
<comment type="similarity">
    <text evidence="1">Belongs to the NAD-dependent glycerol-3-phosphate dehydrogenase family.</text>
</comment>
<keyword id="KW-0963">Cytoplasm</keyword>
<keyword id="KW-0444">Lipid biosynthesis</keyword>
<keyword id="KW-0443">Lipid metabolism</keyword>
<keyword id="KW-0520">NAD</keyword>
<keyword id="KW-0521">NADP</keyword>
<keyword id="KW-0547">Nucleotide-binding</keyword>
<keyword id="KW-0560">Oxidoreductase</keyword>
<keyword id="KW-0594">Phospholipid biosynthesis</keyword>
<keyword id="KW-1208">Phospholipid metabolism</keyword>
<dbReference type="EC" id="1.1.1.94" evidence="1"/>
<dbReference type="EMBL" id="AE017262">
    <property type="protein sequence ID" value="AAT04735.1"/>
    <property type="molecule type" value="Genomic_DNA"/>
</dbReference>
<dbReference type="RefSeq" id="WP_003726833.1">
    <property type="nucleotide sequence ID" value="NC_002973.6"/>
</dbReference>
<dbReference type="SMR" id="Q71Y79"/>
<dbReference type="KEGG" id="lmf:LMOf2365_1965"/>
<dbReference type="HOGENOM" id="CLU_033449_0_2_9"/>
<dbReference type="UniPathway" id="UPA00940"/>
<dbReference type="GO" id="GO:0005829">
    <property type="term" value="C:cytosol"/>
    <property type="evidence" value="ECO:0007669"/>
    <property type="project" value="TreeGrafter"/>
</dbReference>
<dbReference type="GO" id="GO:0047952">
    <property type="term" value="F:glycerol-3-phosphate dehydrogenase [NAD(P)+] activity"/>
    <property type="evidence" value="ECO:0007669"/>
    <property type="project" value="UniProtKB-UniRule"/>
</dbReference>
<dbReference type="GO" id="GO:0051287">
    <property type="term" value="F:NAD binding"/>
    <property type="evidence" value="ECO:0007669"/>
    <property type="project" value="InterPro"/>
</dbReference>
<dbReference type="GO" id="GO:0005975">
    <property type="term" value="P:carbohydrate metabolic process"/>
    <property type="evidence" value="ECO:0007669"/>
    <property type="project" value="InterPro"/>
</dbReference>
<dbReference type="GO" id="GO:0046167">
    <property type="term" value="P:glycerol-3-phosphate biosynthetic process"/>
    <property type="evidence" value="ECO:0007669"/>
    <property type="project" value="UniProtKB-UniRule"/>
</dbReference>
<dbReference type="GO" id="GO:0046168">
    <property type="term" value="P:glycerol-3-phosphate catabolic process"/>
    <property type="evidence" value="ECO:0007669"/>
    <property type="project" value="InterPro"/>
</dbReference>
<dbReference type="GO" id="GO:0006650">
    <property type="term" value="P:glycerophospholipid metabolic process"/>
    <property type="evidence" value="ECO:0007669"/>
    <property type="project" value="UniProtKB-UniRule"/>
</dbReference>
<dbReference type="GO" id="GO:0008654">
    <property type="term" value="P:phospholipid biosynthetic process"/>
    <property type="evidence" value="ECO:0007669"/>
    <property type="project" value="UniProtKB-KW"/>
</dbReference>
<dbReference type="FunFam" id="1.10.1040.10:FF:000001">
    <property type="entry name" value="Glycerol-3-phosphate dehydrogenase [NAD(P)+]"/>
    <property type="match status" value="1"/>
</dbReference>
<dbReference type="FunFam" id="3.40.50.720:FF:000019">
    <property type="entry name" value="Glycerol-3-phosphate dehydrogenase [NAD(P)+]"/>
    <property type="match status" value="1"/>
</dbReference>
<dbReference type="Gene3D" id="1.10.1040.10">
    <property type="entry name" value="N-(1-d-carboxylethyl)-l-norvaline Dehydrogenase, domain 2"/>
    <property type="match status" value="1"/>
</dbReference>
<dbReference type="Gene3D" id="3.40.50.720">
    <property type="entry name" value="NAD(P)-binding Rossmann-like Domain"/>
    <property type="match status" value="1"/>
</dbReference>
<dbReference type="HAMAP" id="MF_00394">
    <property type="entry name" value="NAD_Glyc3P_dehydrog"/>
    <property type="match status" value="1"/>
</dbReference>
<dbReference type="InterPro" id="IPR008927">
    <property type="entry name" value="6-PGluconate_DH-like_C_sf"/>
</dbReference>
<dbReference type="InterPro" id="IPR013328">
    <property type="entry name" value="6PGD_dom2"/>
</dbReference>
<dbReference type="InterPro" id="IPR006168">
    <property type="entry name" value="G3P_DH_NAD-dep"/>
</dbReference>
<dbReference type="InterPro" id="IPR006109">
    <property type="entry name" value="G3P_DH_NAD-dep_C"/>
</dbReference>
<dbReference type="InterPro" id="IPR011128">
    <property type="entry name" value="G3P_DH_NAD-dep_N"/>
</dbReference>
<dbReference type="InterPro" id="IPR036291">
    <property type="entry name" value="NAD(P)-bd_dom_sf"/>
</dbReference>
<dbReference type="NCBIfam" id="NF000940">
    <property type="entry name" value="PRK00094.1-2"/>
    <property type="match status" value="1"/>
</dbReference>
<dbReference type="NCBIfam" id="NF000941">
    <property type="entry name" value="PRK00094.1-3"/>
    <property type="match status" value="1"/>
</dbReference>
<dbReference type="NCBIfam" id="NF000942">
    <property type="entry name" value="PRK00094.1-4"/>
    <property type="match status" value="1"/>
</dbReference>
<dbReference type="PANTHER" id="PTHR11728">
    <property type="entry name" value="GLYCEROL-3-PHOSPHATE DEHYDROGENASE"/>
    <property type="match status" value="1"/>
</dbReference>
<dbReference type="PANTHER" id="PTHR11728:SF1">
    <property type="entry name" value="GLYCEROL-3-PHOSPHATE DEHYDROGENASE [NAD(+)] 2, CHLOROPLASTIC"/>
    <property type="match status" value="1"/>
</dbReference>
<dbReference type="Pfam" id="PF07479">
    <property type="entry name" value="NAD_Gly3P_dh_C"/>
    <property type="match status" value="1"/>
</dbReference>
<dbReference type="Pfam" id="PF01210">
    <property type="entry name" value="NAD_Gly3P_dh_N"/>
    <property type="match status" value="1"/>
</dbReference>
<dbReference type="PIRSF" id="PIRSF000114">
    <property type="entry name" value="Glycerol-3-P_dh"/>
    <property type="match status" value="1"/>
</dbReference>
<dbReference type="PRINTS" id="PR00077">
    <property type="entry name" value="GPDHDRGNASE"/>
</dbReference>
<dbReference type="SUPFAM" id="SSF48179">
    <property type="entry name" value="6-phosphogluconate dehydrogenase C-terminal domain-like"/>
    <property type="match status" value="1"/>
</dbReference>
<dbReference type="SUPFAM" id="SSF51735">
    <property type="entry name" value="NAD(P)-binding Rossmann-fold domains"/>
    <property type="match status" value="1"/>
</dbReference>
<dbReference type="PROSITE" id="PS00957">
    <property type="entry name" value="NAD_G3PDH"/>
    <property type="match status" value="1"/>
</dbReference>
<proteinExistence type="inferred from homology"/>
<evidence type="ECO:0000255" key="1">
    <source>
        <dbReference type="HAMAP-Rule" id="MF_00394"/>
    </source>
</evidence>
<accession>Q71Y79</accession>
<gene>
    <name evidence="1" type="primary">gpsA</name>
    <name type="ordered locus">LMOf2365_1965</name>
</gene>
<organism>
    <name type="scientific">Listeria monocytogenes serotype 4b (strain F2365)</name>
    <dbReference type="NCBI Taxonomy" id="265669"/>
    <lineage>
        <taxon>Bacteria</taxon>
        <taxon>Bacillati</taxon>
        <taxon>Bacillota</taxon>
        <taxon>Bacilli</taxon>
        <taxon>Bacillales</taxon>
        <taxon>Listeriaceae</taxon>
        <taxon>Listeria</taxon>
    </lineage>
</organism>
<sequence length="338" mass="36499">MTQKKVAILGAGSWGTGLALVLADNNHQPVIWGNLDKIVNEINESHTNSHYLPDIILPTEVKATLSLDEAIDGAEIVVIAIPTNAMRIVCKQLNEALKEPTILVHVSKGIEPETNLRMSEVIEDEIDASKRKALVVLSGPSHAEEVALRHPTTLCASCKDLSAAEIVQDRFINNNLRIYTNDDVIGAEIGGALKNIIALGAGISDGLGYGDNAKAALMTRGMAEITRLGVAVGSNPQTFYGLTGIGDLIVTCTSVHSRNWRAGNMLGKGENLDEVLEKMGMVVEGVRTAKAVHGWAKKLDIDMPITESIYAILFENKDAREAVDLLMGREKKIEKESF</sequence>